<feature type="chain" id="PRO_0000125369" description="Kinesin-like protein KIP1">
    <location>
        <begin position="1"/>
        <end position="1111"/>
    </location>
</feature>
<feature type="domain" description="Kinesin motor" evidence="2">
    <location>
        <begin position="52"/>
        <end position="410"/>
    </location>
</feature>
<feature type="region of interest" description="Disordered" evidence="3">
    <location>
        <begin position="1"/>
        <end position="34"/>
    </location>
</feature>
<feature type="region of interest" description="Disordered" evidence="3">
    <location>
        <begin position="1007"/>
        <end position="1111"/>
    </location>
</feature>
<feature type="coiled-coil region" evidence="1">
    <location>
        <begin position="424"/>
        <end position="510"/>
    </location>
</feature>
<feature type="coiled-coil region" evidence="1">
    <location>
        <begin position="648"/>
        <end position="670"/>
    </location>
</feature>
<feature type="coiled-coil region" evidence="1">
    <location>
        <begin position="710"/>
        <end position="780"/>
    </location>
</feature>
<feature type="coiled-coil region" evidence="1">
    <location>
        <begin position="808"/>
        <end position="828"/>
    </location>
</feature>
<feature type="compositionally biased region" description="Polar residues" evidence="3">
    <location>
        <begin position="1"/>
        <end position="11"/>
    </location>
</feature>
<feature type="compositionally biased region" description="Basic and acidic residues" evidence="3">
    <location>
        <begin position="1007"/>
        <end position="1016"/>
    </location>
</feature>
<feature type="compositionally biased region" description="Polar residues" evidence="3">
    <location>
        <begin position="1017"/>
        <end position="1038"/>
    </location>
</feature>
<feature type="compositionally biased region" description="Polar residues" evidence="3">
    <location>
        <begin position="1057"/>
        <end position="1082"/>
    </location>
</feature>
<feature type="binding site" evidence="2">
    <location>
        <begin position="141"/>
        <end position="148"/>
    </location>
    <ligand>
        <name>ATP</name>
        <dbReference type="ChEBI" id="CHEBI:30616"/>
    </ligand>
</feature>
<sequence length="1111" mass="125795">MARSSLPNRRTAQFEANKRRTIAHAPSPSLSNGMHTLTPPTCNNGAATSDSNIHVYVRCRSRNKREIEEKSSVVISTLGPQGKEIILSNGSHQSYSSSKKTYQFDQVFGAESDQETVFNATAKNYIKEMLHGYNCTIFAYGQTGTGKTYTMSGDINILGDVQSTDNLLLGEHAGIIPRVLVDLFKELSSLNKEYSVKISFLELYNENLKDLLSDSEDDDPAVNDPKRQIRIFDNNNNNSSIMVKGMQEIFINSAHEGLNLLMQGSLKRKVAATKCNDLSSRSHTVFTITTNIVEQDSKDHGQNKNFVKIGKLNLVDLAGSENINRSGAENKRAQEAGLINKSLLTLGRVINALVDHSNHIPYRESKLTRLLQDSLGGMTKTCIIATISPAKISMEETASTLEYATRAKSIKNTPQVNQSLSKDTCLKDYIQEIEKLRNDLKNSRNKQGIFITQDQLDLYESNSILIDEQNLKIHNLREQIKKFKENYLNQLDINNLLQSEKEKLIAIIQNFNVDFSNFYSEIQKIHHTNLELMNEVIQQRDFSLENSQKQYNTNQNMQLKISQQVLQTLNTLQGSLNNYNSKCSEVIKGVTEELTRNVNTHKAKHDSTLKSLLNITTNLLMNQMNELVRSISTSLEIFQSDSTSHYRKDLNEIYQSHQQFLKNLQNDIKSCLDSIGSSILTSINEISQNCTTNLNSMNVLIENQQSGSSKLIKEQDLEIKKLKNDLINERRISNQFNQQLAEMKRYFQDHVSRTRSEFHDELNKCIDNLKDKQSKLDQDIWQKTASIFNETDIVVNKIHSDSIASLAHNAENTLKTVSQNNESFTNDLISLSRGMNMDISSKLRSLPINEFLNKISQTICETCGDDNTIASNPVLTSIKKFQNIICSDIALTNEKIMSLIDEIQSQIETISNENNINLIAINENFNSLCNFILTDYDENIMQISKTQDEVLSEHCEKLQSLKILGMDIFTAHSIEKPLHEHTRPEASVIKALPLLDYPKQFQIYRDAENKSKDDTSNSRTCIPNLSTNENFPLSQFSPKTPVPVPDQPLPKVLIPKSINSAKSNRSKTLPNTEGTGRESQNNLKRRFTTEPILKGEETENNDILQNKKLHQ</sequence>
<dbReference type="EMBL" id="Z11962">
    <property type="protein sequence ID" value="CAA78019.1"/>
    <property type="molecule type" value="Genomic_DNA"/>
</dbReference>
<dbReference type="EMBL" id="Z23261">
    <property type="protein sequence ID" value="CAA80785.1"/>
    <property type="molecule type" value="Genomic_DNA"/>
</dbReference>
<dbReference type="EMBL" id="Z35824">
    <property type="protein sequence ID" value="CAA84883.1"/>
    <property type="molecule type" value="Genomic_DNA"/>
</dbReference>
<dbReference type="EMBL" id="BK006936">
    <property type="protein sequence ID" value="DAA07057.1"/>
    <property type="molecule type" value="Genomic_DNA"/>
</dbReference>
<dbReference type="PIR" id="A42640">
    <property type="entry name" value="A42640"/>
</dbReference>
<dbReference type="RefSeq" id="NP_009490.1">
    <property type="nucleotide sequence ID" value="NM_001178303.1"/>
</dbReference>
<dbReference type="SMR" id="P28742"/>
<dbReference type="BioGRID" id="32636">
    <property type="interactions" value="91"/>
</dbReference>
<dbReference type="DIP" id="DIP-174N"/>
<dbReference type="FunCoup" id="P28742">
    <property type="interactions" value="1290"/>
</dbReference>
<dbReference type="IntAct" id="P28742">
    <property type="interactions" value="13"/>
</dbReference>
<dbReference type="MINT" id="P28742"/>
<dbReference type="STRING" id="4932.YBL063W"/>
<dbReference type="iPTMnet" id="P28742"/>
<dbReference type="PaxDb" id="4932-YBL063W"/>
<dbReference type="PeptideAtlas" id="P28742"/>
<dbReference type="EnsemblFungi" id="YBL063W_mRNA">
    <property type="protein sequence ID" value="YBL063W"/>
    <property type="gene ID" value="YBL063W"/>
</dbReference>
<dbReference type="GeneID" id="852216"/>
<dbReference type="KEGG" id="sce:YBL063W"/>
<dbReference type="AGR" id="SGD:S000000159"/>
<dbReference type="SGD" id="S000000159">
    <property type="gene designation" value="KIP1"/>
</dbReference>
<dbReference type="VEuPathDB" id="FungiDB:YBL063W"/>
<dbReference type="eggNOG" id="KOG0243">
    <property type="taxonomic scope" value="Eukaryota"/>
</dbReference>
<dbReference type="HOGENOM" id="CLU_001485_33_2_1"/>
<dbReference type="InParanoid" id="P28742"/>
<dbReference type="OrthoDB" id="3176171at2759"/>
<dbReference type="BioCyc" id="YEAST:G3O-28960-MONOMER"/>
<dbReference type="BioGRID-ORCS" id="852216">
    <property type="hits" value="4 hits in 10 CRISPR screens"/>
</dbReference>
<dbReference type="CD-CODE" id="876000F7">
    <property type="entry name" value="Centrosome"/>
</dbReference>
<dbReference type="PRO" id="PR:P28742"/>
<dbReference type="Proteomes" id="UP000002311">
    <property type="component" value="Chromosome II"/>
</dbReference>
<dbReference type="RNAct" id="P28742">
    <property type="molecule type" value="protein"/>
</dbReference>
<dbReference type="GO" id="GO:0005737">
    <property type="term" value="C:cytoplasm"/>
    <property type="evidence" value="ECO:0007669"/>
    <property type="project" value="UniProtKB-KW"/>
</dbReference>
<dbReference type="GO" id="GO:0005871">
    <property type="term" value="C:kinesin complex"/>
    <property type="evidence" value="ECO:0000304"/>
    <property type="project" value="SGD"/>
</dbReference>
<dbReference type="GO" id="GO:0072686">
    <property type="term" value="C:mitotic spindle"/>
    <property type="evidence" value="ECO:0000318"/>
    <property type="project" value="GO_Central"/>
</dbReference>
<dbReference type="GO" id="GO:0005634">
    <property type="term" value="C:nucleus"/>
    <property type="evidence" value="ECO:0007005"/>
    <property type="project" value="SGD"/>
</dbReference>
<dbReference type="GO" id="GO:0005876">
    <property type="term" value="C:spindle microtubule"/>
    <property type="evidence" value="ECO:0000314"/>
    <property type="project" value="SGD"/>
</dbReference>
<dbReference type="GO" id="GO:0005524">
    <property type="term" value="F:ATP binding"/>
    <property type="evidence" value="ECO:0007669"/>
    <property type="project" value="UniProtKB-KW"/>
</dbReference>
<dbReference type="GO" id="GO:0008017">
    <property type="term" value="F:microtubule binding"/>
    <property type="evidence" value="ECO:0007669"/>
    <property type="project" value="InterPro"/>
</dbReference>
<dbReference type="GO" id="GO:0003777">
    <property type="term" value="F:microtubule motor activity"/>
    <property type="evidence" value="ECO:0000316"/>
    <property type="project" value="SGD"/>
</dbReference>
<dbReference type="GO" id="GO:0008574">
    <property type="term" value="F:plus-end-directed microtubule motor activity"/>
    <property type="evidence" value="ECO:0000318"/>
    <property type="project" value="GO_Central"/>
</dbReference>
<dbReference type="GO" id="GO:0030543">
    <property type="term" value="P:2-micrometer plasmid partitioning"/>
    <property type="evidence" value="ECO:0000315"/>
    <property type="project" value="SGD"/>
</dbReference>
<dbReference type="GO" id="GO:0051301">
    <property type="term" value="P:cell division"/>
    <property type="evidence" value="ECO:0007669"/>
    <property type="project" value="UniProtKB-KW"/>
</dbReference>
<dbReference type="GO" id="GO:0000073">
    <property type="term" value="P:initial mitotic spindle pole body separation"/>
    <property type="evidence" value="ECO:0000316"/>
    <property type="project" value="SGD"/>
</dbReference>
<dbReference type="GO" id="GO:0007019">
    <property type="term" value="P:microtubule depolymerization"/>
    <property type="evidence" value="ECO:0000315"/>
    <property type="project" value="SGD"/>
</dbReference>
<dbReference type="GO" id="GO:0007018">
    <property type="term" value="P:microtubule-based movement"/>
    <property type="evidence" value="ECO:0007669"/>
    <property type="project" value="InterPro"/>
</dbReference>
<dbReference type="GO" id="GO:0000070">
    <property type="term" value="P:mitotic sister chromatid segregation"/>
    <property type="evidence" value="ECO:0000316"/>
    <property type="project" value="SGD"/>
</dbReference>
<dbReference type="GO" id="GO:0090307">
    <property type="term" value="P:mitotic spindle assembly"/>
    <property type="evidence" value="ECO:0000315"/>
    <property type="project" value="SGD"/>
</dbReference>
<dbReference type="GO" id="GO:0000022">
    <property type="term" value="P:mitotic spindle elongation"/>
    <property type="evidence" value="ECO:0000315"/>
    <property type="project" value="SGD"/>
</dbReference>
<dbReference type="GO" id="GO:0051231">
    <property type="term" value="P:spindle elongation"/>
    <property type="evidence" value="ECO:0000318"/>
    <property type="project" value="GO_Central"/>
</dbReference>
<dbReference type="CDD" id="cd01364">
    <property type="entry name" value="KISc_BimC_Eg5"/>
    <property type="match status" value="1"/>
</dbReference>
<dbReference type="FunFam" id="3.40.850.10:FF:000051">
    <property type="entry name" value="Kinesin-like protein bimC"/>
    <property type="match status" value="1"/>
</dbReference>
<dbReference type="Gene3D" id="1.20.120.20">
    <property type="entry name" value="Apolipoprotein"/>
    <property type="match status" value="1"/>
</dbReference>
<dbReference type="Gene3D" id="3.40.850.10">
    <property type="entry name" value="Kinesin motor domain"/>
    <property type="match status" value="1"/>
</dbReference>
<dbReference type="InterPro" id="IPR047149">
    <property type="entry name" value="KIF11-like"/>
</dbReference>
<dbReference type="InterPro" id="IPR047241">
    <property type="entry name" value="KIF11-like_kin_motor_dom"/>
</dbReference>
<dbReference type="InterPro" id="IPR019821">
    <property type="entry name" value="Kinesin_motor_CS"/>
</dbReference>
<dbReference type="InterPro" id="IPR001752">
    <property type="entry name" value="Kinesin_motor_dom"/>
</dbReference>
<dbReference type="InterPro" id="IPR036961">
    <property type="entry name" value="Kinesin_motor_dom_sf"/>
</dbReference>
<dbReference type="InterPro" id="IPR027417">
    <property type="entry name" value="P-loop_NTPase"/>
</dbReference>
<dbReference type="PANTHER" id="PTHR47970">
    <property type="entry name" value="KINESIN-LIKE PROTEIN KIF11"/>
    <property type="match status" value="1"/>
</dbReference>
<dbReference type="PANTHER" id="PTHR47970:SF19">
    <property type="entry name" value="KINESIN-LIKE PROTEIN KIP1"/>
    <property type="match status" value="1"/>
</dbReference>
<dbReference type="Pfam" id="PF00225">
    <property type="entry name" value="Kinesin"/>
    <property type="match status" value="1"/>
</dbReference>
<dbReference type="PRINTS" id="PR00380">
    <property type="entry name" value="KINESINHEAVY"/>
</dbReference>
<dbReference type="SMART" id="SM00129">
    <property type="entry name" value="KISc"/>
    <property type="match status" value="1"/>
</dbReference>
<dbReference type="SUPFAM" id="SSF52540">
    <property type="entry name" value="P-loop containing nucleoside triphosphate hydrolases"/>
    <property type="match status" value="1"/>
</dbReference>
<dbReference type="PROSITE" id="PS00411">
    <property type="entry name" value="KINESIN_MOTOR_1"/>
    <property type="match status" value="1"/>
</dbReference>
<dbReference type="PROSITE" id="PS50067">
    <property type="entry name" value="KINESIN_MOTOR_2"/>
    <property type="match status" value="1"/>
</dbReference>
<gene>
    <name type="primary">KIP1</name>
    <name type="synonym">CIN9</name>
    <name type="ordered locus">YBL063W</name>
    <name type="ORF">YBL0504</name>
    <name type="ORF">YBL0521</name>
</gene>
<protein>
    <recommendedName>
        <fullName>Kinesin-like protein KIP1</fullName>
    </recommendedName>
    <alternativeName>
        <fullName>Chromosome instability protein 9</fullName>
    </alternativeName>
</protein>
<evidence type="ECO:0000255" key="1"/>
<evidence type="ECO:0000255" key="2">
    <source>
        <dbReference type="PROSITE-ProRule" id="PRU00283"/>
    </source>
</evidence>
<evidence type="ECO:0000256" key="3">
    <source>
        <dbReference type="SAM" id="MobiDB-lite"/>
    </source>
</evidence>
<evidence type="ECO:0000269" key="4">
    <source>
    </source>
</evidence>
<keyword id="KW-0067">ATP-binding</keyword>
<keyword id="KW-0131">Cell cycle</keyword>
<keyword id="KW-0132">Cell division</keyword>
<keyword id="KW-0175">Coiled coil</keyword>
<keyword id="KW-0963">Cytoplasm</keyword>
<keyword id="KW-0206">Cytoskeleton</keyword>
<keyword id="KW-0493">Microtubule</keyword>
<keyword id="KW-0498">Mitosis</keyword>
<keyword id="KW-0505">Motor protein</keyword>
<keyword id="KW-0547">Nucleotide-binding</keyword>
<keyword id="KW-1185">Reference proteome</keyword>
<reference key="1">
    <citation type="journal article" date="1992" name="J. Cell Biol.">
        <title>Kinesin-related proteins required for assembly of the mitotic spindle.</title>
        <authorList>
            <person name="Roof D.M."/>
            <person name="Meluh P.B."/>
            <person name="Rose M.D."/>
        </authorList>
    </citation>
    <scope>NUCLEOTIDE SEQUENCE [GENOMIC DNA]</scope>
    <source>
        <strain>ATCC 204508 / S288c</strain>
    </source>
</reference>
<reference key="2">
    <citation type="journal article" date="1993" name="Yeast">
        <title>Sequencing and functional analysis of a 32,560 bp segment on the left arm of yeast chromosome II. Identification of 26 open reading frames, including the KIP1 and SEC17 genes.</title>
        <authorList>
            <person name="Scherens B."/>
            <person name="el Bakkoury M."/>
            <person name="Vierendeels F."/>
            <person name="Dubois E."/>
            <person name="Messenguy F."/>
        </authorList>
    </citation>
    <scope>NUCLEOTIDE SEQUENCE [GENOMIC DNA]</scope>
    <source>
        <strain>ATCC 204508 / S288c</strain>
    </source>
</reference>
<reference key="3">
    <citation type="journal article" date="1994" name="EMBO J.">
        <title>Complete DNA sequence of yeast chromosome II.</title>
        <authorList>
            <person name="Feldmann H."/>
            <person name="Aigle M."/>
            <person name="Aljinovic G."/>
            <person name="Andre B."/>
            <person name="Baclet M.C."/>
            <person name="Barthe C."/>
            <person name="Baur A."/>
            <person name="Becam A.-M."/>
            <person name="Biteau N."/>
            <person name="Boles E."/>
            <person name="Brandt T."/>
            <person name="Brendel M."/>
            <person name="Brueckner M."/>
            <person name="Bussereau F."/>
            <person name="Christiansen C."/>
            <person name="Contreras R."/>
            <person name="Crouzet M."/>
            <person name="Cziepluch C."/>
            <person name="Demolis N."/>
            <person name="Delaveau T."/>
            <person name="Doignon F."/>
            <person name="Domdey H."/>
            <person name="Duesterhus S."/>
            <person name="Dubois E."/>
            <person name="Dujon B."/>
            <person name="El Bakkoury M."/>
            <person name="Entian K.-D."/>
            <person name="Feuermann M."/>
            <person name="Fiers W."/>
            <person name="Fobo G.M."/>
            <person name="Fritz C."/>
            <person name="Gassenhuber J."/>
            <person name="Glansdorff N."/>
            <person name="Goffeau A."/>
            <person name="Grivell L.A."/>
            <person name="de Haan M."/>
            <person name="Hein C."/>
            <person name="Herbert C.J."/>
            <person name="Hollenberg C.P."/>
            <person name="Holmstroem K."/>
            <person name="Jacq C."/>
            <person name="Jacquet M."/>
            <person name="Jauniaux J.-C."/>
            <person name="Jonniaux J.-L."/>
            <person name="Kallesoee T."/>
            <person name="Kiesau P."/>
            <person name="Kirchrath L."/>
            <person name="Koetter P."/>
            <person name="Korol S."/>
            <person name="Liebl S."/>
            <person name="Logghe M."/>
            <person name="Lohan A.J.E."/>
            <person name="Louis E.J."/>
            <person name="Li Z.Y."/>
            <person name="Maat M.J."/>
            <person name="Mallet L."/>
            <person name="Mannhaupt G."/>
            <person name="Messenguy F."/>
            <person name="Miosga T."/>
            <person name="Molemans F."/>
            <person name="Mueller S."/>
            <person name="Nasr F."/>
            <person name="Obermaier B."/>
            <person name="Perea J."/>
            <person name="Pierard A."/>
            <person name="Piravandi E."/>
            <person name="Pohl F.M."/>
            <person name="Pohl T.M."/>
            <person name="Potier S."/>
            <person name="Proft M."/>
            <person name="Purnelle B."/>
            <person name="Ramezani Rad M."/>
            <person name="Rieger M."/>
            <person name="Rose M."/>
            <person name="Schaaff-Gerstenschlaeger I."/>
            <person name="Scherens B."/>
            <person name="Schwarzlose C."/>
            <person name="Skala J."/>
            <person name="Slonimski P.P."/>
            <person name="Smits P.H.M."/>
            <person name="Souciet J.-L."/>
            <person name="Steensma H.Y."/>
            <person name="Stucka R."/>
            <person name="Urrestarazu L.A."/>
            <person name="van der Aart Q.J.M."/>
            <person name="Van Dyck L."/>
            <person name="Vassarotti A."/>
            <person name="Vetter I."/>
            <person name="Vierendeels F."/>
            <person name="Vissers S."/>
            <person name="Wagner G."/>
            <person name="de Wergifosse P."/>
            <person name="Wolfe K.H."/>
            <person name="Zagulski M."/>
            <person name="Zimmermann F.K."/>
            <person name="Mewes H.-W."/>
            <person name="Kleine K."/>
        </authorList>
    </citation>
    <scope>NUCLEOTIDE SEQUENCE [LARGE SCALE GENOMIC DNA]</scope>
    <source>
        <strain>ATCC 204508 / S288c</strain>
    </source>
</reference>
<reference key="4">
    <citation type="journal article" date="2014" name="G3 (Bethesda)">
        <title>The reference genome sequence of Saccharomyces cerevisiae: Then and now.</title>
        <authorList>
            <person name="Engel S.R."/>
            <person name="Dietrich F.S."/>
            <person name="Fisk D.G."/>
            <person name="Binkley G."/>
            <person name="Balakrishnan R."/>
            <person name="Costanzo M.C."/>
            <person name="Dwight S.S."/>
            <person name="Hitz B.C."/>
            <person name="Karra K."/>
            <person name="Nash R.S."/>
            <person name="Weng S."/>
            <person name="Wong E.D."/>
            <person name="Lloyd P."/>
            <person name="Skrzypek M.S."/>
            <person name="Miyasato S.R."/>
            <person name="Simison M."/>
            <person name="Cherry J.M."/>
        </authorList>
    </citation>
    <scope>GENOME REANNOTATION</scope>
    <source>
        <strain>ATCC 204508 / S288c</strain>
    </source>
</reference>
<reference key="5">
    <citation type="journal article" date="1992" name="Cell">
        <title>Kinesin-related proteins required for structural integrity of the mitotic spindle.</title>
        <authorList>
            <person name="Saunders W.S."/>
            <person name="Hoyt M.A."/>
        </authorList>
    </citation>
    <scope>CHARACTERIZATION</scope>
    <source>
        <strain>ATCC 204508 / S288c</strain>
    </source>
</reference>
<reference key="6">
    <citation type="journal article" date="2003" name="Nature">
        <title>Global analysis of protein expression in yeast.</title>
        <authorList>
            <person name="Ghaemmaghami S."/>
            <person name="Huh W.-K."/>
            <person name="Bower K."/>
            <person name="Howson R.W."/>
            <person name="Belle A."/>
            <person name="Dephoure N."/>
            <person name="O'Shea E.K."/>
            <person name="Weissman J.S."/>
        </authorList>
    </citation>
    <scope>LEVEL OF PROTEIN EXPRESSION [LARGE SCALE ANALYSIS]</scope>
</reference>
<organism>
    <name type="scientific">Saccharomyces cerevisiae (strain ATCC 204508 / S288c)</name>
    <name type="common">Baker's yeast</name>
    <dbReference type="NCBI Taxonomy" id="559292"/>
    <lineage>
        <taxon>Eukaryota</taxon>
        <taxon>Fungi</taxon>
        <taxon>Dikarya</taxon>
        <taxon>Ascomycota</taxon>
        <taxon>Saccharomycotina</taxon>
        <taxon>Saccharomycetes</taxon>
        <taxon>Saccharomycetales</taxon>
        <taxon>Saccharomycetaceae</taxon>
        <taxon>Saccharomyces</taxon>
    </lineage>
</organism>
<proteinExistence type="evidence at protein level"/>
<name>KIP1_YEAST</name>
<comment type="function">
    <text>Required for assembly of the mitotic spindle. Interacts with spindle microtubules to produce an outwardly directed force acting upon the poles. Following spindle assembly, CIN8 and KIP1 apparently act to oppose a force that draws separated poles back together. This force seems to be mediate by KAR3.</text>
</comment>
<comment type="subunit">
    <text>Might be dimeric.</text>
</comment>
<comment type="subcellular location">
    <subcellularLocation>
        <location>Cytoplasm</location>
        <location>Cytoskeleton</location>
        <location>Spindle</location>
    </subcellularLocation>
    <text>Spindle microtubules that lie between the poles.</text>
</comment>
<comment type="miscellaneous">
    <text evidence="4">Present with 56 molecules/cell in log phase SD medium.</text>
</comment>
<comment type="similarity">
    <text evidence="2">Belongs to the TRAFAC class myosin-kinesin ATPase superfamily. Kinesin family. BimC subfamily.</text>
</comment>
<accession>P28742</accession>
<accession>D6VPT7</accession>